<accession>Q9Z7J5</accession>
<gene>
    <name type="ordered locus">CPn_0710</name>
    <name type="ordered locus">CP_0036</name>
    <name type="ordered locus">CPj0710</name>
    <name type="ordered locus">CpB0737</name>
</gene>
<feature type="chain" id="PRO_0000218416" description="Uncharacterized protein CPn_0710/CP_0036/CPj0710/CpB0737">
    <location>
        <begin position="1"/>
        <end position="84"/>
    </location>
</feature>
<reference key="1">
    <citation type="journal article" date="1999" name="Nat. Genet.">
        <title>Comparative genomes of Chlamydia pneumoniae and C. trachomatis.</title>
        <authorList>
            <person name="Kalman S."/>
            <person name="Mitchell W.P."/>
            <person name="Marathe R."/>
            <person name="Lammel C.J."/>
            <person name="Fan J."/>
            <person name="Hyman R.W."/>
            <person name="Olinger L."/>
            <person name="Grimwood J."/>
            <person name="Davis R.W."/>
            <person name="Stephens R.S."/>
        </authorList>
    </citation>
    <scope>NUCLEOTIDE SEQUENCE [LARGE SCALE GENOMIC DNA]</scope>
    <source>
        <strain>CWL029</strain>
    </source>
</reference>
<reference key="2">
    <citation type="journal article" date="2000" name="Nucleic Acids Res.">
        <title>Genome sequences of Chlamydia trachomatis MoPn and Chlamydia pneumoniae AR39.</title>
        <authorList>
            <person name="Read T.D."/>
            <person name="Brunham R.C."/>
            <person name="Shen C."/>
            <person name="Gill S.R."/>
            <person name="Heidelberg J.F."/>
            <person name="White O."/>
            <person name="Hickey E.K."/>
            <person name="Peterson J.D."/>
            <person name="Utterback T.R."/>
            <person name="Berry K.J."/>
            <person name="Bass S."/>
            <person name="Linher K.D."/>
            <person name="Weidman J.F."/>
            <person name="Khouri H.M."/>
            <person name="Craven B."/>
            <person name="Bowman C."/>
            <person name="Dodson R.J."/>
            <person name="Gwinn M.L."/>
            <person name="Nelson W.C."/>
            <person name="DeBoy R.T."/>
            <person name="Kolonay J.F."/>
            <person name="McClarty G."/>
            <person name="Salzberg S.L."/>
            <person name="Eisen J.A."/>
            <person name="Fraser C.M."/>
        </authorList>
    </citation>
    <scope>NUCLEOTIDE SEQUENCE [LARGE SCALE GENOMIC DNA]</scope>
    <source>
        <strain>AR39</strain>
    </source>
</reference>
<reference key="3">
    <citation type="journal article" date="2000" name="Nucleic Acids Res.">
        <title>Comparison of whole genome sequences of Chlamydia pneumoniae J138 from Japan and CWL029 from USA.</title>
        <authorList>
            <person name="Shirai M."/>
            <person name="Hirakawa H."/>
            <person name="Kimoto M."/>
            <person name="Tabuchi M."/>
            <person name="Kishi F."/>
            <person name="Ouchi K."/>
            <person name="Shiba T."/>
            <person name="Ishii K."/>
            <person name="Hattori M."/>
            <person name="Kuhara S."/>
            <person name="Nakazawa T."/>
        </authorList>
    </citation>
    <scope>NUCLEOTIDE SEQUENCE [LARGE SCALE GENOMIC DNA]</scope>
    <source>
        <strain>J138</strain>
    </source>
</reference>
<reference key="4">
    <citation type="submission" date="2000-01" db="EMBL/GenBank/DDBJ databases">
        <title>Genomic sequence comparison of two unrelated isolates of Chlamydia pneumoniae from Japan and U.S.</title>
        <authorList>
            <person name="Hirakawa H."/>
            <person name="Shirai M."/>
            <person name="Kuhara S."/>
        </authorList>
    </citation>
    <scope>NUCLEOTIDE SEQUENCE [GENOMIC DNA]</scope>
    <source>
        <strain>J138</strain>
    </source>
</reference>
<reference key="5">
    <citation type="submission" date="2002-05" db="EMBL/GenBank/DDBJ databases">
        <title>The genome sequence of Chlamydia pneumoniae TW183 and comparison with other Chlamydia strains based on whole genome sequence analysis.</title>
        <authorList>
            <person name="Geng M.M."/>
            <person name="Schuhmacher A."/>
            <person name="Muehldorfer I."/>
            <person name="Bensch K.W."/>
            <person name="Schaefer K.P."/>
            <person name="Schneider S."/>
            <person name="Pohl T."/>
            <person name="Essig A."/>
            <person name="Marre R."/>
            <person name="Melchers K."/>
        </authorList>
    </citation>
    <scope>NUCLEOTIDE SEQUENCE [LARGE SCALE GENOMIC DNA]</scope>
    <source>
        <strain>TW-183</strain>
    </source>
</reference>
<name>Y710_CHLPN</name>
<proteinExistence type="inferred from homology"/>
<comment type="similarity">
    <text evidence="1">Belongs to the chlamydial CPn_0710/CT_666/TC_0037 family.</text>
</comment>
<dbReference type="EMBL" id="AE001363">
    <property type="protein sequence ID" value="AAD18849.1"/>
    <property type="molecule type" value="Genomic_DNA"/>
</dbReference>
<dbReference type="EMBL" id="AE002161">
    <property type="protein sequence ID" value="AAF37931.1"/>
    <property type="molecule type" value="Genomic_DNA"/>
</dbReference>
<dbReference type="EMBL" id="BA000008">
    <property type="protein sequence ID" value="BAA98917.1"/>
    <property type="molecule type" value="Genomic_DNA"/>
</dbReference>
<dbReference type="EMBL" id="AB035952">
    <property type="protein sequence ID" value="BAA88660.1"/>
    <property type="molecule type" value="Genomic_DNA"/>
</dbReference>
<dbReference type="EMBL" id="AE009440">
    <property type="protein sequence ID" value="AAP98666.1"/>
    <property type="molecule type" value="Genomic_DNA"/>
</dbReference>
<dbReference type="PIR" id="C86579">
    <property type="entry name" value="C86579"/>
</dbReference>
<dbReference type="PIR" id="F72046">
    <property type="entry name" value="F72046"/>
</dbReference>
<dbReference type="RefSeq" id="NP_224906.1">
    <property type="nucleotide sequence ID" value="NC_000922.1"/>
</dbReference>
<dbReference type="RefSeq" id="WP_010883348.1">
    <property type="nucleotide sequence ID" value="NZ_LN847257.1"/>
</dbReference>
<dbReference type="SMR" id="Q9Z7J5"/>
<dbReference type="GeneID" id="45050765"/>
<dbReference type="KEGG" id="cpa:CP_0036"/>
<dbReference type="KEGG" id="cpj:CPj0710"/>
<dbReference type="KEGG" id="cpn:CPn_0710"/>
<dbReference type="KEGG" id="cpt:CpB0737"/>
<dbReference type="PATRIC" id="fig|115713.3.peg.784"/>
<dbReference type="HOGENOM" id="CLU_203071_0_0_0"/>
<dbReference type="OrthoDB" id="18745at2"/>
<dbReference type="Proteomes" id="UP000000583">
    <property type="component" value="Chromosome"/>
</dbReference>
<dbReference type="Proteomes" id="UP000000801">
    <property type="component" value="Chromosome"/>
</dbReference>
<dbReference type="InterPro" id="IPR035365">
    <property type="entry name" value="DUF5407"/>
</dbReference>
<dbReference type="Pfam" id="PF17401">
    <property type="entry name" value="DUF5407"/>
    <property type="match status" value="1"/>
</dbReference>
<organism>
    <name type="scientific">Chlamydia pneumoniae</name>
    <name type="common">Chlamydophila pneumoniae</name>
    <dbReference type="NCBI Taxonomy" id="83558"/>
    <lineage>
        <taxon>Bacteria</taxon>
        <taxon>Pseudomonadati</taxon>
        <taxon>Chlamydiota</taxon>
        <taxon>Chlamydiia</taxon>
        <taxon>Chlamydiales</taxon>
        <taxon>Chlamydiaceae</taxon>
        <taxon>Chlamydia/Chlamydophila group</taxon>
        <taxon>Chlamydia</taxon>
    </lineage>
</organism>
<protein>
    <recommendedName>
        <fullName>Uncharacterized protein CPn_0710/CP_0036/CPj0710/CpB0737</fullName>
    </recommendedName>
</protein>
<sequence>MATNKSCTAFDFNKMLDGVCTYVKGVQQYLTELETSTQGTVDLGTMFNLQFRMQILSQYMESVSNILTAVNTEMITMARAVKGS</sequence>
<evidence type="ECO:0000305" key="1"/>